<reference key="1">
    <citation type="journal article" date="2008" name="Comp. Biochem. Physiol.">
        <title>Proteomics of the neurotoxic fraction from the sea anemone Bunodosoma cangicum venom: novel peptides belonging to new classes of toxins.</title>
        <authorList>
            <person name="Zaharenko A.J."/>
            <person name="Ferreira W.A. Jr."/>
            <person name="Oliveira J.S."/>
            <person name="Richardson M."/>
            <person name="Pimenta D.C."/>
            <person name="Konno K."/>
            <person name="Portaro F.C."/>
            <person name="de Freitas J.C."/>
        </authorList>
    </citation>
    <scope>PROTEIN SEQUENCE</scope>
    <scope>MASS SPECTROMETRY</scope>
</reference>
<comment type="subcellular location">
    <subcellularLocation>
        <location evidence="5">Secreted</location>
    </subcellularLocation>
    <subcellularLocation>
        <location evidence="5">Nematocyst</location>
    </subcellularLocation>
</comment>
<comment type="mass spectrometry" mass="4303.36" method="MALDI" evidence="3"/>
<comment type="similarity">
    <text evidence="2">Belongs to the sea anemone type 3 (BDS) potassium channel toxin family.</text>
</comment>
<proteinExistence type="evidence at protein level"/>
<accession>P86464</accession>
<name>BDS21_BUNCN</name>
<dbReference type="SMR" id="P86464"/>
<dbReference type="GO" id="GO:0005576">
    <property type="term" value="C:extracellular region"/>
    <property type="evidence" value="ECO:0007669"/>
    <property type="project" value="UniProtKB-SubCell"/>
</dbReference>
<dbReference type="GO" id="GO:0042151">
    <property type="term" value="C:nematocyst"/>
    <property type="evidence" value="ECO:0007669"/>
    <property type="project" value="UniProtKB-SubCell"/>
</dbReference>
<dbReference type="GO" id="GO:0008200">
    <property type="term" value="F:ion channel inhibitor activity"/>
    <property type="evidence" value="ECO:0007669"/>
    <property type="project" value="InterPro"/>
</dbReference>
<dbReference type="GO" id="GO:0090729">
    <property type="term" value="F:toxin activity"/>
    <property type="evidence" value="ECO:0007669"/>
    <property type="project" value="UniProtKB-KW"/>
</dbReference>
<dbReference type="Gene3D" id="2.20.20.10">
    <property type="entry name" value="Anthopleurin-A"/>
    <property type="match status" value="1"/>
</dbReference>
<dbReference type="InterPro" id="IPR012414">
    <property type="entry name" value="BDS_K_chnl_tox"/>
</dbReference>
<dbReference type="InterPro" id="IPR023355">
    <property type="entry name" value="Myo_ane_neurotoxin_sf"/>
</dbReference>
<dbReference type="Pfam" id="PF07936">
    <property type="entry name" value="Defensin_4"/>
    <property type="match status" value="1"/>
</dbReference>
<organism>
    <name type="scientific">Bunodosoma cangicum</name>
    <name type="common">Sea anemone</name>
    <dbReference type="NCBI Taxonomy" id="138296"/>
    <lineage>
        <taxon>Eukaryota</taxon>
        <taxon>Metazoa</taxon>
        <taxon>Cnidaria</taxon>
        <taxon>Anthozoa</taxon>
        <taxon>Hexacorallia</taxon>
        <taxon>Actiniaria</taxon>
        <taxon>Actiniidae</taxon>
        <taxon>Bunodosoma</taxon>
    </lineage>
</organism>
<feature type="chain" id="PRO_0000392958" description="Toxin Bcg III 29.21">
    <location>
        <begin position="1"/>
        <end position="36" status="greater than"/>
    </location>
</feature>
<feature type="disulfide bond" evidence="1">
    <location>
        <begin position="4"/>
        <end status="unknown"/>
    </location>
</feature>
<feature type="disulfide bond" evidence="1">
    <location>
        <begin position="6"/>
        <end position="31"/>
    </location>
</feature>
<feature type="disulfide bond" evidence="1">
    <location>
        <begin position="21"/>
        <end status="unknown"/>
    </location>
</feature>
<feature type="non-terminal residue">
    <location>
        <position position="36"/>
    </location>
</feature>
<keyword id="KW-0903">Direct protein sequencing</keyword>
<keyword id="KW-1015">Disulfide bond</keyword>
<keyword id="KW-0872">Ion channel impairing toxin</keyword>
<keyword id="KW-0166">Nematocyst</keyword>
<keyword id="KW-0964">Secreted</keyword>
<keyword id="KW-0800">Toxin</keyword>
<evidence type="ECO:0000250" key="1">
    <source>
        <dbReference type="UniProtKB" id="P61541"/>
    </source>
</evidence>
<evidence type="ECO:0000255" key="2"/>
<evidence type="ECO:0000269" key="3">
    <source>
    </source>
</evidence>
<evidence type="ECO:0000303" key="4">
    <source>
    </source>
</evidence>
<evidence type="ECO:0000305" key="5">
    <source>
    </source>
</evidence>
<sequence length="36" mass="3672">GVSCKCGSKKGVYWFGQITGCPGGHGYKGSCSYVLG</sequence>
<protein>
    <recommendedName>
        <fullName evidence="4">Toxin Bcg III 29.21</fullName>
        <shortName evidence="4">Toxin Bcg 29.21</shortName>
    </recommendedName>
</protein>